<comment type="function">
    <text evidence="5">Inactive polyglycylase.</text>
</comment>
<comment type="interaction">
    <interactant intactId="EBI-7844656">
        <id>Q6ZVT0</id>
    </interactant>
    <interactant intactId="EBI-10179719">
        <id>A2RRN7</id>
        <label>CADPS</label>
    </interactant>
    <organismsDiffer>false</organismsDiffer>
    <experiments>3</experiments>
</comment>
<comment type="interaction">
    <interactant intactId="EBI-7844656">
        <id>Q6ZVT0</id>
    </interactant>
    <interactant intactId="EBI-739624">
        <id>Q8NHQ1</id>
        <label>CEP70</label>
    </interactant>
    <organismsDiffer>false</organismsDiffer>
    <experiments>3</experiments>
</comment>
<comment type="interaction">
    <interactant intactId="EBI-7844656">
        <id>Q6ZVT0</id>
    </interactant>
    <interactant intactId="EBI-741101">
        <id>Q13643</id>
        <label>FHL3</label>
    </interactant>
    <organismsDiffer>false</organismsDiffer>
    <experiments>3</experiments>
</comment>
<comment type="interaction">
    <interactant intactId="EBI-7844656">
        <id>Q6ZVT0</id>
    </interactant>
    <interactant intactId="EBI-10171697">
        <id>Q6A162</id>
        <label>KRT40</label>
    </interactant>
    <organismsDiffer>false</organismsDiffer>
    <experiments>3</experiments>
</comment>
<comment type="interaction">
    <interactant intactId="EBI-7844656">
        <id>Q6ZVT0</id>
    </interactant>
    <interactant intactId="EBI-724076">
        <id>Q99750</id>
        <label>MDFI</label>
    </interactant>
    <organismsDiffer>false</organismsDiffer>
    <experiments>3</experiments>
</comment>
<comment type="interaction">
    <interactant intactId="EBI-7844656">
        <id>Q6ZVT0</id>
    </interactant>
    <interactant intactId="EBI-356392">
        <id>P55209</id>
        <label>NAP1L1</label>
    </interactant>
    <organismsDiffer>false</organismsDiffer>
    <experiments>5</experiments>
</comment>
<comment type="interaction">
    <interactant intactId="EBI-7844656">
        <id>Q6ZVT0</id>
    </interactant>
    <interactant intactId="EBI-302355">
        <id>Q9UL42</id>
        <label>PNMA2</label>
    </interactant>
    <organismsDiffer>false</organismsDiffer>
    <experiments>3</experiments>
</comment>
<comment type="interaction">
    <interactant intactId="EBI-7844656">
        <id>Q6ZVT0</id>
    </interactant>
    <interactant intactId="EBI-740322">
        <id>Q93062</id>
        <label>RBPMS</label>
    </interactant>
    <organismsDiffer>false</organismsDiffer>
    <experiments>3</experiments>
</comment>
<comment type="interaction">
    <interactant intactId="EBI-7844656">
        <id>Q6ZVT0</id>
    </interactant>
    <interactant intactId="EBI-741515">
        <id>Q9NVV9</id>
        <label>THAP1</label>
    </interactant>
    <organismsDiffer>false</organismsDiffer>
    <experiments>3</experiments>
</comment>
<comment type="interaction">
    <interactant intactId="EBI-7844656">
        <id>Q6ZVT0</id>
    </interactant>
    <interactant intactId="EBI-719493">
        <id>P14373</id>
        <label>TRIM27</label>
    </interactant>
    <organismsDiffer>false</organismsDiffer>
    <experiments>3</experiments>
</comment>
<comment type="interaction">
    <interactant intactId="EBI-7844656">
        <id>Q6ZVT0</id>
    </interactant>
    <interactant intactId="EBI-742327">
        <id>Q15654</id>
        <label>TRIP6</label>
    </interactant>
    <organismsDiffer>false</organismsDiffer>
    <experiments>3</experiments>
</comment>
<comment type="interaction">
    <interactant intactId="EBI-11979997">
        <id>Q6ZVT0-3</id>
    </interactant>
    <interactant intactId="EBI-739624">
        <id>Q8NHQ1</id>
        <label>CEP70</label>
    </interactant>
    <organismsDiffer>false</organismsDiffer>
    <experiments>3</experiments>
</comment>
<comment type="interaction">
    <interactant intactId="EBI-11979997">
        <id>Q6ZVT0-3</id>
    </interactant>
    <interactant intactId="EBI-742887">
        <id>Q8TAP6</id>
        <label>CEP76</label>
    </interactant>
    <organismsDiffer>false</organismsDiffer>
    <experiments>3</experiments>
</comment>
<comment type="interaction">
    <interactant intactId="EBI-11979997">
        <id>Q6ZVT0-3</id>
    </interactant>
    <interactant intactId="EBI-741101">
        <id>Q13643</id>
        <label>FHL3</label>
    </interactant>
    <organismsDiffer>false</organismsDiffer>
    <experiments>3</experiments>
</comment>
<comment type="interaction">
    <interactant intactId="EBI-11979997">
        <id>Q6ZVT0-3</id>
    </interactant>
    <interactant intactId="EBI-11958506">
        <id>O76013-2</id>
        <label>KRT36</label>
    </interactant>
    <organismsDiffer>false</organismsDiffer>
    <experiments>3</experiments>
</comment>
<comment type="interaction">
    <interactant intactId="EBI-11979997">
        <id>Q6ZVT0-3</id>
    </interactant>
    <interactant intactId="EBI-741037">
        <id>Q9BRK4</id>
        <label>LZTS2</label>
    </interactant>
    <organismsDiffer>false</organismsDiffer>
    <experiments>3</experiments>
</comment>
<comment type="interaction">
    <interactant intactId="EBI-11979997">
        <id>Q6ZVT0-3</id>
    </interactant>
    <interactant intactId="EBI-724076">
        <id>Q99750</id>
        <label>MDFI</label>
    </interactant>
    <organismsDiffer>false</organismsDiffer>
    <experiments>3</experiments>
</comment>
<comment type="interaction">
    <interactant intactId="EBI-11979997">
        <id>Q6ZVT0-3</id>
    </interactant>
    <interactant intactId="EBI-16439278">
        <id>Q6FHY5</id>
        <label>MEOX2</label>
    </interactant>
    <organismsDiffer>false</organismsDiffer>
    <experiments>3</experiments>
</comment>
<comment type="interaction">
    <interactant intactId="EBI-11979997">
        <id>Q6ZVT0-3</id>
    </interactant>
    <interactant intactId="EBI-11522433">
        <id>Q5JR59-3</id>
        <label>MTUS2</label>
    </interactant>
    <organismsDiffer>false</organismsDiffer>
    <experiments>3</experiments>
</comment>
<comment type="interaction">
    <interactant intactId="EBI-11979997">
        <id>Q6ZVT0-3</id>
    </interactant>
    <interactant intactId="EBI-739895">
        <id>Q8N6Y0</id>
        <label>USHBP1</label>
    </interactant>
    <organismsDiffer>false</organismsDiffer>
    <experiments>3</experiments>
</comment>
<comment type="alternative products">
    <event type="alternative splicing"/>
    <isoform>
        <id>Q6ZVT0-1</id>
        <name>1</name>
        <sequence type="displayed"/>
    </isoform>
    <isoform>
        <id>Q6ZVT0-2</id>
        <name>2</name>
        <sequence type="described" ref="VSP_032262"/>
    </isoform>
    <isoform>
        <id>Q6ZVT0-3</id>
        <name>3</name>
        <sequence type="described" ref="VSP_032262 VSP_032263 VSP_032264"/>
    </isoform>
</comment>
<comment type="caution">
    <text evidence="10">Two inactivating mutations in human TTLL10 (Ser-448 and Lys-467) are proposed to explain the lack of polyglycylation.</text>
</comment>
<dbReference type="EMBL" id="AK093438">
    <property type="protein sequence ID" value="BAC04164.1"/>
    <property type="molecule type" value="mRNA"/>
</dbReference>
<dbReference type="EMBL" id="AK124125">
    <property type="protein sequence ID" value="BAC85781.1"/>
    <property type="molecule type" value="mRNA"/>
</dbReference>
<dbReference type="EMBL" id="AL162741">
    <property type="status" value="NOT_ANNOTATED_CDS"/>
    <property type="molecule type" value="Genomic_DNA"/>
</dbReference>
<dbReference type="EMBL" id="AL390719">
    <property type="status" value="NOT_ANNOTATED_CDS"/>
    <property type="molecule type" value="Genomic_DNA"/>
</dbReference>
<dbReference type="EMBL" id="CH471183">
    <property type="protein sequence ID" value="EAW56285.1"/>
    <property type="molecule type" value="Genomic_DNA"/>
</dbReference>
<dbReference type="EMBL" id="BC126152">
    <property type="protein sequence ID" value="AAI26153.1"/>
    <property type="molecule type" value="mRNA"/>
</dbReference>
<dbReference type="EMBL" id="BC126154">
    <property type="protein sequence ID" value="AAI26155.1"/>
    <property type="molecule type" value="mRNA"/>
</dbReference>
<dbReference type="CCDS" id="CCDS44036.1">
    <molecule id="Q6ZVT0-1"/>
</dbReference>
<dbReference type="CCDS" id="CCDS8.1">
    <molecule id="Q6ZVT0-3"/>
</dbReference>
<dbReference type="RefSeq" id="NP_001123517.1">
    <molecule id="Q6ZVT0-1"/>
    <property type="nucleotide sequence ID" value="NM_001130045.2"/>
</dbReference>
<dbReference type="RefSeq" id="NP_001358578.1">
    <molecule id="Q6ZVT0-1"/>
    <property type="nucleotide sequence ID" value="NM_001371649.1"/>
</dbReference>
<dbReference type="RefSeq" id="NP_694986.2">
    <molecule id="Q6ZVT0-3"/>
    <property type="nucleotide sequence ID" value="NM_153254.3"/>
</dbReference>
<dbReference type="RefSeq" id="XP_005244795.1">
    <molecule id="Q6ZVT0-2"/>
    <property type="nucleotide sequence ID" value="XM_005244738.2"/>
</dbReference>
<dbReference type="RefSeq" id="XP_011539479.1">
    <property type="nucleotide sequence ID" value="XM_011541177.2"/>
</dbReference>
<dbReference type="RefSeq" id="XP_016856401.1">
    <molecule id="Q6ZVT0-1"/>
    <property type="nucleotide sequence ID" value="XM_017000912.2"/>
</dbReference>
<dbReference type="RefSeq" id="XP_047272826.1">
    <molecule id="Q6ZVT0-1"/>
    <property type="nucleotide sequence ID" value="XM_047416870.1"/>
</dbReference>
<dbReference type="SMR" id="Q6ZVT0"/>
<dbReference type="BioGRID" id="129020">
    <property type="interactions" value="16"/>
</dbReference>
<dbReference type="FunCoup" id="Q6ZVT0">
    <property type="interactions" value="356"/>
</dbReference>
<dbReference type="IntAct" id="Q6ZVT0">
    <property type="interactions" value="17"/>
</dbReference>
<dbReference type="MINT" id="Q6ZVT0"/>
<dbReference type="STRING" id="9606.ENSP00000368592"/>
<dbReference type="GlyGen" id="Q6ZVT0">
    <property type="glycosylation" value="1 site"/>
</dbReference>
<dbReference type="iPTMnet" id="Q6ZVT0"/>
<dbReference type="PhosphoSitePlus" id="Q6ZVT0"/>
<dbReference type="BioMuta" id="TTLL10"/>
<dbReference type="DMDM" id="172046174"/>
<dbReference type="MassIVE" id="Q6ZVT0"/>
<dbReference type="PaxDb" id="9606-ENSP00000368592"/>
<dbReference type="PeptideAtlas" id="Q6ZVT0"/>
<dbReference type="ProteomicsDB" id="68439">
    <molecule id="Q6ZVT0-1"/>
</dbReference>
<dbReference type="ProteomicsDB" id="68440">
    <molecule id="Q6ZVT0-2"/>
</dbReference>
<dbReference type="ProteomicsDB" id="68441">
    <molecule id="Q6ZVT0-3"/>
</dbReference>
<dbReference type="Antibodypedia" id="51322">
    <property type="antibodies" value="43 antibodies from 14 providers"/>
</dbReference>
<dbReference type="DNASU" id="254173"/>
<dbReference type="Ensembl" id="ENST00000379288.3">
    <molecule id="Q6ZVT0-3"/>
    <property type="protein sequence ID" value="ENSP00000368590.3"/>
    <property type="gene ID" value="ENSG00000162571.14"/>
</dbReference>
<dbReference type="Ensembl" id="ENST00000379289.6">
    <molecule id="Q6ZVT0-1"/>
    <property type="protein sequence ID" value="ENSP00000368591.1"/>
    <property type="gene ID" value="ENSG00000162571.14"/>
</dbReference>
<dbReference type="Ensembl" id="ENST00000379290.6">
    <molecule id="Q6ZVT0-1"/>
    <property type="protein sequence ID" value="ENSP00000368592.1"/>
    <property type="gene ID" value="ENSG00000162571.14"/>
</dbReference>
<dbReference type="GeneID" id="254173"/>
<dbReference type="KEGG" id="hsa:254173"/>
<dbReference type="MANE-Select" id="ENST00000379289.6">
    <property type="protein sequence ID" value="ENSP00000368591.1"/>
    <property type="RefSeq nucleotide sequence ID" value="NM_001130045.2"/>
    <property type="RefSeq protein sequence ID" value="NP_001123517.1"/>
</dbReference>
<dbReference type="UCSC" id="uc001acy.2">
    <molecule id="Q6ZVT0-1"/>
    <property type="organism name" value="human"/>
</dbReference>
<dbReference type="AGR" id="HGNC:26693"/>
<dbReference type="CTD" id="254173"/>
<dbReference type="GeneCards" id="TTLL10"/>
<dbReference type="HGNC" id="HGNC:26693">
    <property type="gene designation" value="TTLL10"/>
</dbReference>
<dbReference type="HPA" id="ENSG00000162571">
    <property type="expression patterns" value="Group enriched (fallopian tube, testis)"/>
</dbReference>
<dbReference type="neXtProt" id="NX_Q6ZVT0"/>
<dbReference type="OpenTargets" id="ENSG00000162571"/>
<dbReference type="PharmGKB" id="PA142670679"/>
<dbReference type="VEuPathDB" id="HostDB:ENSG00000162571"/>
<dbReference type="eggNOG" id="KOG2157">
    <property type="taxonomic scope" value="Eukaryota"/>
</dbReference>
<dbReference type="GeneTree" id="ENSGT00940000160919"/>
<dbReference type="HOGENOM" id="CLU_022993_1_0_1"/>
<dbReference type="InParanoid" id="Q6ZVT0"/>
<dbReference type="OMA" id="YINNTFW"/>
<dbReference type="OrthoDB" id="202825at2759"/>
<dbReference type="PAN-GO" id="Q6ZVT0">
    <property type="GO annotations" value="0 GO annotations based on evolutionary models"/>
</dbReference>
<dbReference type="PhylomeDB" id="Q6ZVT0"/>
<dbReference type="TreeFam" id="TF329363"/>
<dbReference type="PathwayCommons" id="Q6ZVT0"/>
<dbReference type="Reactome" id="R-HSA-8955332">
    <property type="pathway name" value="Carboxyterminal post-translational modifications of tubulin"/>
</dbReference>
<dbReference type="SignaLink" id="Q6ZVT0"/>
<dbReference type="BioGRID-ORCS" id="254173">
    <property type="hits" value="12 hits in 1149 CRISPR screens"/>
</dbReference>
<dbReference type="GenomeRNAi" id="254173"/>
<dbReference type="Pharos" id="Q6ZVT0">
    <property type="development level" value="Tdark"/>
</dbReference>
<dbReference type="PRO" id="PR:Q6ZVT0"/>
<dbReference type="Proteomes" id="UP000005640">
    <property type="component" value="Chromosome 1"/>
</dbReference>
<dbReference type="RNAct" id="Q6ZVT0">
    <property type="molecule type" value="protein"/>
</dbReference>
<dbReference type="Bgee" id="ENSG00000162571">
    <property type="expression patterns" value="Expressed in right uterine tube and 103 other cell types or tissues"/>
</dbReference>
<dbReference type="ExpressionAtlas" id="Q6ZVT0">
    <property type="expression patterns" value="baseline and differential"/>
</dbReference>
<dbReference type="GO" id="GO:0005829">
    <property type="term" value="C:cytosol"/>
    <property type="evidence" value="ECO:0000304"/>
    <property type="project" value="Reactome"/>
</dbReference>
<dbReference type="GO" id="GO:0005524">
    <property type="term" value="F:ATP binding"/>
    <property type="evidence" value="ECO:0007669"/>
    <property type="project" value="UniProtKB-KW"/>
</dbReference>
<dbReference type="GO" id="GO:0070735">
    <property type="term" value="F:protein-glycine ligase activity"/>
    <property type="evidence" value="ECO:0000304"/>
    <property type="project" value="Reactome"/>
</dbReference>
<dbReference type="GO" id="GO:0036211">
    <property type="term" value="P:protein modification process"/>
    <property type="evidence" value="ECO:0007669"/>
    <property type="project" value="InterPro"/>
</dbReference>
<dbReference type="FunFam" id="3.30.470.20:FF:000046">
    <property type="entry name" value="inactive polyglycylase TTLL10"/>
    <property type="match status" value="1"/>
</dbReference>
<dbReference type="Gene3D" id="3.30.470.20">
    <property type="entry name" value="ATP-grasp fold, B domain"/>
    <property type="match status" value="1"/>
</dbReference>
<dbReference type="InterPro" id="IPR004344">
    <property type="entry name" value="TTL/TTLL_fam"/>
</dbReference>
<dbReference type="InterPro" id="IPR027752">
    <property type="entry name" value="TTLL10"/>
</dbReference>
<dbReference type="PANTHER" id="PTHR46810">
    <property type="entry name" value="INACTIVE POLYGLYCYLASE TTLL10"/>
    <property type="match status" value="1"/>
</dbReference>
<dbReference type="PANTHER" id="PTHR46810:SF1">
    <property type="entry name" value="INACTIVE POLYGLYCYLASE TTLL10"/>
    <property type="match status" value="1"/>
</dbReference>
<dbReference type="Pfam" id="PF03133">
    <property type="entry name" value="TTL"/>
    <property type="match status" value="1"/>
</dbReference>
<dbReference type="SUPFAM" id="SSF56059">
    <property type="entry name" value="Glutathione synthetase ATP-binding domain-like"/>
    <property type="match status" value="1"/>
</dbReference>
<dbReference type="PROSITE" id="PS51221">
    <property type="entry name" value="TTL"/>
    <property type="match status" value="1"/>
</dbReference>
<accession>Q6ZVT0</accession>
<accession>B1AMF6</accession>
<accession>Q5T2W4</accession>
<accession>Q5T2W5</accession>
<accession>Q8N9X2</accession>
<evidence type="ECO:0000250" key="1">
    <source>
        <dbReference type="UniProtKB" id="Q6ZT98"/>
    </source>
</evidence>
<evidence type="ECO:0000255" key="2">
    <source>
        <dbReference type="PROSITE-ProRule" id="PRU00568"/>
    </source>
</evidence>
<evidence type="ECO:0000256" key="3">
    <source>
        <dbReference type="SAM" id="MobiDB-lite"/>
    </source>
</evidence>
<evidence type="ECO:0000269" key="4">
    <source>
    </source>
</evidence>
<evidence type="ECO:0000269" key="5">
    <source>
    </source>
</evidence>
<evidence type="ECO:0000303" key="6">
    <source>
    </source>
</evidence>
<evidence type="ECO:0000303" key="7">
    <source>
    </source>
</evidence>
<evidence type="ECO:0000303" key="8">
    <source>
    </source>
</evidence>
<evidence type="ECO:0000305" key="9"/>
<evidence type="ECO:0000305" key="10">
    <source>
    </source>
</evidence>
<evidence type="ECO:0000312" key="11">
    <source>
        <dbReference type="HGNC" id="HGNC:26693"/>
    </source>
</evidence>
<feature type="chain" id="PRO_0000324520" description="Inactive polyglycylase TTLL10">
    <location>
        <begin position="1"/>
        <end position="673"/>
    </location>
</feature>
<feature type="domain" description="TTL" evidence="2">
    <location>
        <begin position="155"/>
        <end position="552"/>
    </location>
</feature>
<feature type="region of interest" description="Disordered" evidence="3">
    <location>
        <begin position="1"/>
        <end position="132"/>
    </location>
</feature>
<feature type="region of interest" description="Disordered" evidence="3">
    <location>
        <begin position="569"/>
        <end position="673"/>
    </location>
</feature>
<feature type="compositionally biased region" description="Basic residues" evidence="3">
    <location>
        <begin position="8"/>
        <end position="36"/>
    </location>
</feature>
<feature type="compositionally biased region" description="Pro residues" evidence="3">
    <location>
        <begin position="52"/>
        <end position="62"/>
    </location>
</feature>
<feature type="compositionally biased region" description="Basic and acidic residues" evidence="3">
    <location>
        <begin position="89"/>
        <end position="105"/>
    </location>
</feature>
<feature type="compositionally biased region" description="Pro residues" evidence="3">
    <location>
        <begin position="612"/>
        <end position="627"/>
    </location>
</feature>
<feature type="compositionally biased region" description="Basic and acidic residues" evidence="3">
    <location>
        <begin position="661"/>
        <end position="673"/>
    </location>
</feature>
<feature type="binding site" evidence="1">
    <location>
        <begin position="362"/>
        <end position="365"/>
    </location>
    <ligand>
        <name>ATP</name>
        <dbReference type="ChEBI" id="CHEBI:30616"/>
    </ligand>
</feature>
<feature type="binding site" evidence="1">
    <location>
        <position position="375"/>
    </location>
    <ligand>
        <name>ATP</name>
        <dbReference type="ChEBI" id="CHEBI:30616"/>
    </ligand>
</feature>
<feature type="binding site" evidence="1">
    <location>
        <position position="377"/>
    </location>
    <ligand>
        <name>ATP</name>
        <dbReference type="ChEBI" id="CHEBI:30616"/>
    </ligand>
</feature>
<feature type="splice variant" id="VSP_032262" description="In isoform 2 and isoform 3." evidence="6 7">
    <location>
        <begin position="1"/>
        <end position="73"/>
    </location>
</feature>
<feature type="splice variant" id="VSP_032263" description="In isoform 3." evidence="6 7">
    <original>KRMQQIMAHC</original>
    <variation>VRPLCPPVWE</variation>
    <location>
        <begin position="468"/>
        <end position="477"/>
    </location>
</feature>
<feature type="splice variant" id="VSP_032264" description="In isoform 3." evidence="6 7">
    <location>
        <begin position="478"/>
        <end position="673"/>
    </location>
</feature>
<feature type="sequence variant" id="VAR_039806" description="In a colorectal cancer sample; somatic mutation; dbSNP:rs139755178." evidence="4">
    <original>A</original>
    <variation>T</variation>
    <location>
        <position position="130"/>
    </location>
</feature>
<feature type="sequence variant" id="VAR_039807" description="In dbSNP:rs13374146.">
    <original>V</original>
    <variation>A</variation>
    <location>
        <position position="249"/>
    </location>
</feature>
<feature type="sequence variant" id="VAR_039808" description="In dbSNP:rs1320571.">
    <original>S</original>
    <variation>N</variation>
    <location>
        <position position="448"/>
    </location>
</feature>
<feature type="sequence variant" id="VAR_058480" description="In dbSNP:rs2274791.">
    <original>G</original>
    <variation>D</variation>
    <location>
        <position position="578"/>
    </location>
</feature>
<feature type="mutagenesis site" description="Recovers polyglycylase activity; when associated with T-467." evidence="5">
    <original>S</original>
    <variation>N</variation>
    <location>
        <position position="448"/>
    </location>
</feature>
<feature type="mutagenesis site" description="Recovers polyglycylase activity; when associated with N-448." evidence="5">
    <original>K</original>
    <variation>T</variation>
    <location>
        <position position="467"/>
    </location>
</feature>
<feature type="sequence conflict" description="In Ref. 1; BAC85781." evidence="9" ref="1">
    <original>Y</original>
    <variation>D</variation>
    <location>
        <position position="214"/>
    </location>
</feature>
<feature type="sequence conflict" description="In Ref. 1; BAC04164." evidence="9" ref="1">
    <original>K</original>
    <variation>R</variation>
    <location>
        <position position="241"/>
    </location>
</feature>
<gene>
    <name evidence="11" type="primary">TTLL10</name>
</gene>
<name>TTL10_HUMAN</name>
<reference key="1">
    <citation type="journal article" date="2004" name="Nat. Genet.">
        <title>Complete sequencing and characterization of 21,243 full-length human cDNAs.</title>
        <authorList>
            <person name="Ota T."/>
            <person name="Suzuki Y."/>
            <person name="Nishikawa T."/>
            <person name="Otsuki T."/>
            <person name="Sugiyama T."/>
            <person name="Irie R."/>
            <person name="Wakamatsu A."/>
            <person name="Hayashi K."/>
            <person name="Sato H."/>
            <person name="Nagai K."/>
            <person name="Kimura K."/>
            <person name="Makita H."/>
            <person name="Sekine M."/>
            <person name="Obayashi M."/>
            <person name="Nishi T."/>
            <person name="Shibahara T."/>
            <person name="Tanaka T."/>
            <person name="Ishii S."/>
            <person name="Yamamoto J."/>
            <person name="Saito K."/>
            <person name="Kawai Y."/>
            <person name="Isono Y."/>
            <person name="Nakamura Y."/>
            <person name="Nagahari K."/>
            <person name="Murakami K."/>
            <person name="Yasuda T."/>
            <person name="Iwayanagi T."/>
            <person name="Wagatsuma M."/>
            <person name="Shiratori A."/>
            <person name="Sudo H."/>
            <person name="Hosoiri T."/>
            <person name="Kaku Y."/>
            <person name="Kodaira H."/>
            <person name="Kondo H."/>
            <person name="Sugawara M."/>
            <person name="Takahashi M."/>
            <person name="Kanda K."/>
            <person name="Yokoi T."/>
            <person name="Furuya T."/>
            <person name="Kikkawa E."/>
            <person name="Omura Y."/>
            <person name="Abe K."/>
            <person name="Kamihara K."/>
            <person name="Katsuta N."/>
            <person name="Sato K."/>
            <person name="Tanikawa M."/>
            <person name="Yamazaki M."/>
            <person name="Ninomiya K."/>
            <person name="Ishibashi T."/>
            <person name="Yamashita H."/>
            <person name="Murakawa K."/>
            <person name="Fujimori K."/>
            <person name="Tanai H."/>
            <person name="Kimata M."/>
            <person name="Watanabe M."/>
            <person name="Hiraoka S."/>
            <person name="Chiba Y."/>
            <person name="Ishida S."/>
            <person name="Ono Y."/>
            <person name="Takiguchi S."/>
            <person name="Watanabe S."/>
            <person name="Yosida M."/>
            <person name="Hotuta T."/>
            <person name="Kusano J."/>
            <person name="Kanehori K."/>
            <person name="Takahashi-Fujii A."/>
            <person name="Hara H."/>
            <person name="Tanase T.-O."/>
            <person name="Nomura Y."/>
            <person name="Togiya S."/>
            <person name="Komai F."/>
            <person name="Hara R."/>
            <person name="Takeuchi K."/>
            <person name="Arita M."/>
            <person name="Imose N."/>
            <person name="Musashino K."/>
            <person name="Yuuki H."/>
            <person name="Oshima A."/>
            <person name="Sasaki N."/>
            <person name="Aotsuka S."/>
            <person name="Yoshikawa Y."/>
            <person name="Matsunawa H."/>
            <person name="Ichihara T."/>
            <person name="Shiohata N."/>
            <person name="Sano S."/>
            <person name="Moriya S."/>
            <person name="Momiyama H."/>
            <person name="Satoh N."/>
            <person name="Takami S."/>
            <person name="Terashima Y."/>
            <person name="Suzuki O."/>
            <person name="Nakagawa S."/>
            <person name="Senoh A."/>
            <person name="Mizoguchi H."/>
            <person name="Goto Y."/>
            <person name="Shimizu F."/>
            <person name="Wakebe H."/>
            <person name="Hishigaki H."/>
            <person name="Watanabe T."/>
            <person name="Sugiyama A."/>
            <person name="Takemoto M."/>
            <person name="Kawakami B."/>
            <person name="Yamazaki M."/>
            <person name="Watanabe K."/>
            <person name="Kumagai A."/>
            <person name="Itakura S."/>
            <person name="Fukuzumi Y."/>
            <person name="Fujimori Y."/>
            <person name="Komiyama M."/>
            <person name="Tashiro H."/>
            <person name="Tanigami A."/>
            <person name="Fujiwara T."/>
            <person name="Ono T."/>
            <person name="Yamada K."/>
            <person name="Fujii Y."/>
            <person name="Ozaki K."/>
            <person name="Hirao M."/>
            <person name="Ohmori Y."/>
            <person name="Kawabata A."/>
            <person name="Hikiji T."/>
            <person name="Kobatake N."/>
            <person name="Inagaki H."/>
            <person name="Ikema Y."/>
            <person name="Okamoto S."/>
            <person name="Okitani R."/>
            <person name="Kawakami T."/>
            <person name="Noguchi S."/>
            <person name="Itoh T."/>
            <person name="Shigeta K."/>
            <person name="Senba T."/>
            <person name="Matsumura K."/>
            <person name="Nakajima Y."/>
            <person name="Mizuno T."/>
            <person name="Morinaga M."/>
            <person name="Sasaki M."/>
            <person name="Togashi T."/>
            <person name="Oyama M."/>
            <person name="Hata H."/>
            <person name="Watanabe M."/>
            <person name="Komatsu T."/>
            <person name="Mizushima-Sugano J."/>
            <person name="Satoh T."/>
            <person name="Shirai Y."/>
            <person name="Takahashi Y."/>
            <person name="Nakagawa K."/>
            <person name="Okumura K."/>
            <person name="Nagase T."/>
            <person name="Nomura N."/>
            <person name="Kikuchi H."/>
            <person name="Masuho Y."/>
            <person name="Yamashita R."/>
            <person name="Nakai K."/>
            <person name="Yada T."/>
            <person name="Nakamura Y."/>
            <person name="Ohara O."/>
            <person name="Isogai T."/>
            <person name="Sugano S."/>
        </authorList>
    </citation>
    <scope>NUCLEOTIDE SEQUENCE [LARGE SCALE MRNA] (ISOFORMS 1 AND 3)</scope>
    <source>
        <tissue>Testis</tissue>
    </source>
</reference>
<reference key="2">
    <citation type="journal article" date="2006" name="Nature">
        <title>The DNA sequence and biological annotation of human chromosome 1.</title>
        <authorList>
            <person name="Gregory S.G."/>
            <person name="Barlow K.F."/>
            <person name="McLay K.E."/>
            <person name="Kaul R."/>
            <person name="Swarbreck D."/>
            <person name="Dunham A."/>
            <person name="Scott C.E."/>
            <person name="Howe K.L."/>
            <person name="Woodfine K."/>
            <person name="Spencer C.C.A."/>
            <person name="Jones M.C."/>
            <person name="Gillson C."/>
            <person name="Searle S."/>
            <person name="Zhou Y."/>
            <person name="Kokocinski F."/>
            <person name="McDonald L."/>
            <person name="Evans R."/>
            <person name="Phillips K."/>
            <person name="Atkinson A."/>
            <person name="Cooper R."/>
            <person name="Jones C."/>
            <person name="Hall R.E."/>
            <person name="Andrews T.D."/>
            <person name="Lloyd C."/>
            <person name="Ainscough R."/>
            <person name="Almeida J.P."/>
            <person name="Ambrose K.D."/>
            <person name="Anderson F."/>
            <person name="Andrew R.W."/>
            <person name="Ashwell R.I.S."/>
            <person name="Aubin K."/>
            <person name="Babbage A.K."/>
            <person name="Bagguley C.L."/>
            <person name="Bailey J."/>
            <person name="Beasley H."/>
            <person name="Bethel G."/>
            <person name="Bird C.P."/>
            <person name="Bray-Allen S."/>
            <person name="Brown J.Y."/>
            <person name="Brown A.J."/>
            <person name="Buckley D."/>
            <person name="Burton J."/>
            <person name="Bye J."/>
            <person name="Carder C."/>
            <person name="Chapman J.C."/>
            <person name="Clark S.Y."/>
            <person name="Clarke G."/>
            <person name="Clee C."/>
            <person name="Cobley V."/>
            <person name="Collier R.E."/>
            <person name="Corby N."/>
            <person name="Coville G.J."/>
            <person name="Davies J."/>
            <person name="Deadman R."/>
            <person name="Dunn M."/>
            <person name="Earthrowl M."/>
            <person name="Ellington A.G."/>
            <person name="Errington H."/>
            <person name="Frankish A."/>
            <person name="Frankland J."/>
            <person name="French L."/>
            <person name="Garner P."/>
            <person name="Garnett J."/>
            <person name="Gay L."/>
            <person name="Ghori M.R.J."/>
            <person name="Gibson R."/>
            <person name="Gilby L.M."/>
            <person name="Gillett W."/>
            <person name="Glithero R.J."/>
            <person name="Grafham D.V."/>
            <person name="Griffiths C."/>
            <person name="Griffiths-Jones S."/>
            <person name="Grocock R."/>
            <person name="Hammond S."/>
            <person name="Harrison E.S.I."/>
            <person name="Hart E."/>
            <person name="Haugen E."/>
            <person name="Heath P.D."/>
            <person name="Holmes S."/>
            <person name="Holt K."/>
            <person name="Howden P.J."/>
            <person name="Hunt A.R."/>
            <person name="Hunt S.E."/>
            <person name="Hunter G."/>
            <person name="Isherwood J."/>
            <person name="James R."/>
            <person name="Johnson C."/>
            <person name="Johnson D."/>
            <person name="Joy A."/>
            <person name="Kay M."/>
            <person name="Kershaw J.K."/>
            <person name="Kibukawa M."/>
            <person name="Kimberley A.M."/>
            <person name="King A."/>
            <person name="Knights A.J."/>
            <person name="Lad H."/>
            <person name="Laird G."/>
            <person name="Lawlor S."/>
            <person name="Leongamornlert D.A."/>
            <person name="Lloyd D.M."/>
            <person name="Loveland J."/>
            <person name="Lovell J."/>
            <person name="Lush M.J."/>
            <person name="Lyne R."/>
            <person name="Martin S."/>
            <person name="Mashreghi-Mohammadi M."/>
            <person name="Matthews L."/>
            <person name="Matthews N.S.W."/>
            <person name="McLaren S."/>
            <person name="Milne S."/>
            <person name="Mistry S."/>
            <person name="Moore M.J.F."/>
            <person name="Nickerson T."/>
            <person name="O'Dell C.N."/>
            <person name="Oliver K."/>
            <person name="Palmeiri A."/>
            <person name="Palmer S.A."/>
            <person name="Parker A."/>
            <person name="Patel D."/>
            <person name="Pearce A.V."/>
            <person name="Peck A.I."/>
            <person name="Pelan S."/>
            <person name="Phelps K."/>
            <person name="Phillimore B.J."/>
            <person name="Plumb R."/>
            <person name="Rajan J."/>
            <person name="Raymond C."/>
            <person name="Rouse G."/>
            <person name="Saenphimmachak C."/>
            <person name="Sehra H.K."/>
            <person name="Sheridan E."/>
            <person name="Shownkeen R."/>
            <person name="Sims S."/>
            <person name="Skuce C.D."/>
            <person name="Smith M."/>
            <person name="Steward C."/>
            <person name="Subramanian S."/>
            <person name="Sycamore N."/>
            <person name="Tracey A."/>
            <person name="Tromans A."/>
            <person name="Van Helmond Z."/>
            <person name="Wall M."/>
            <person name="Wallis J.M."/>
            <person name="White S."/>
            <person name="Whitehead S.L."/>
            <person name="Wilkinson J.E."/>
            <person name="Willey D.L."/>
            <person name="Williams H."/>
            <person name="Wilming L."/>
            <person name="Wray P.W."/>
            <person name="Wu Z."/>
            <person name="Coulson A."/>
            <person name="Vaudin M."/>
            <person name="Sulston J.E."/>
            <person name="Durbin R.M."/>
            <person name="Hubbard T."/>
            <person name="Wooster R."/>
            <person name="Dunham I."/>
            <person name="Carter N.P."/>
            <person name="McVean G."/>
            <person name="Ross M.T."/>
            <person name="Harrow J."/>
            <person name="Olson M.V."/>
            <person name="Beck S."/>
            <person name="Rogers J."/>
            <person name="Bentley D.R."/>
        </authorList>
    </citation>
    <scope>NUCLEOTIDE SEQUENCE [LARGE SCALE GENOMIC DNA]</scope>
</reference>
<reference key="3">
    <citation type="submission" date="2005-07" db="EMBL/GenBank/DDBJ databases">
        <authorList>
            <person name="Mural R.J."/>
            <person name="Istrail S."/>
            <person name="Sutton G.G."/>
            <person name="Florea L."/>
            <person name="Halpern A.L."/>
            <person name="Mobarry C.M."/>
            <person name="Lippert R."/>
            <person name="Walenz B."/>
            <person name="Shatkay H."/>
            <person name="Dew I."/>
            <person name="Miller J.R."/>
            <person name="Flanigan M.J."/>
            <person name="Edwards N.J."/>
            <person name="Bolanos R."/>
            <person name="Fasulo D."/>
            <person name="Halldorsson B.V."/>
            <person name="Hannenhalli S."/>
            <person name="Turner R."/>
            <person name="Yooseph S."/>
            <person name="Lu F."/>
            <person name="Nusskern D.R."/>
            <person name="Shue B.C."/>
            <person name="Zheng X.H."/>
            <person name="Zhong F."/>
            <person name="Delcher A.L."/>
            <person name="Huson D.H."/>
            <person name="Kravitz S.A."/>
            <person name="Mouchard L."/>
            <person name="Reinert K."/>
            <person name="Remington K.A."/>
            <person name="Clark A.G."/>
            <person name="Waterman M.S."/>
            <person name="Eichler E.E."/>
            <person name="Adams M.D."/>
            <person name="Hunkapiller M.W."/>
            <person name="Myers E.W."/>
            <person name="Venter J.C."/>
        </authorList>
    </citation>
    <scope>NUCLEOTIDE SEQUENCE [LARGE SCALE GENOMIC DNA]</scope>
</reference>
<reference key="4">
    <citation type="journal article" date="2004" name="Genome Res.">
        <title>The status, quality, and expansion of the NIH full-length cDNA project: the Mammalian Gene Collection (MGC).</title>
        <authorList>
            <consortium name="The MGC Project Team"/>
        </authorList>
    </citation>
    <scope>NUCLEOTIDE SEQUENCE [LARGE SCALE MRNA] (ISOFORM 3)</scope>
</reference>
<reference key="5">
    <citation type="journal article" date="2009" name="Cell">
        <title>Evolutionary divergence of enzymatic mechanisms for posttranslational polyglycylation.</title>
        <authorList>
            <person name="Rogowski K."/>
            <person name="Juge F."/>
            <person name="van Dijk J."/>
            <person name="Wloga D."/>
            <person name="Strub J.-M."/>
            <person name="Levilliers N."/>
            <person name="Thomas D."/>
            <person name="Bre M.-H."/>
            <person name="Van Dorsselaer A."/>
            <person name="Gaertig J."/>
            <person name="Janke C."/>
        </authorList>
    </citation>
    <scope>FUNCTION</scope>
    <scope>MUTAGENESIS OF SER-448 AND LYS-467</scope>
</reference>
<reference key="6">
    <citation type="journal article" date="2006" name="Science">
        <title>The consensus coding sequences of human breast and colorectal cancers.</title>
        <authorList>
            <person name="Sjoeblom T."/>
            <person name="Jones S."/>
            <person name="Wood L.D."/>
            <person name="Parsons D.W."/>
            <person name="Lin J."/>
            <person name="Barber T.D."/>
            <person name="Mandelker D."/>
            <person name="Leary R.J."/>
            <person name="Ptak J."/>
            <person name="Silliman N."/>
            <person name="Szabo S."/>
            <person name="Buckhaults P."/>
            <person name="Farrell C."/>
            <person name="Meeh P."/>
            <person name="Markowitz S.D."/>
            <person name="Willis J."/>
            <person name="Dawson D."/>
            <person name="Willson J.K.V."/>
            <person name="Gazdar A.F."/>
            <person name="Hartigan J."/>
            <person name="Wu L."/>
            <person name="Liu C."/>
            <person name="Parmigiani G."/>
            <person name="Park B.H."/>
            <person name="Bachman K.E."/>
            <person name="Papadopoulos N."/>
            <person name="Vogelstein B."/>
            <person name="Kinzler K.W."/>
            <person name="Velculescu V.E."/>
        </authorList>
    </citation>
    <scope>VARIANT [LARGE SCALE ANALYSIS] THR-130</scope>
</reference>
<keyword id="KW-0025">Alternative splicing</keyword>
<keyword id="KW-0067">ATP-binding</keyword>
<keyword id="KW-0547">Nucleotide-binding</keyword>
<keyword id="KW-1267">Proteomics identification</keyword>
<keyword id="KW-1185">Reference proteome</keyword>
<sequence length="673" mass="75042">MDHSCTRFIHRRGPPTRTRAGFKRGKRPRIQQRPRARVSGTIPASRLHPAPASQPGPCPAPGHCPVGPAHERPMGSSQEEGLRCQPSQPDHDADGHCGPDLEGAERASATPGPPGLLNSHRPADSDDTNAAGPSAALLEGLLLGGGKPSPHSTRPGPFFYIGGSNGATIISSYCKSKGWQRIHDSRRDDYTLKWCEVKSRDSYGSFREGEQLLYQLPNNKLLTTKIGLLSTLRGRARAMSKASKVPGGVQARLEKDAAAPALEDLPWTSPGYLRPQRVLRMEEFFPETYRLDLKHEREAFFTLFDETQIWICKPTASNQGKGIFLLRNQEEVAALQAKTRSMEDDPIHHKTPFRGPQARVVQRYIQNPLLVDGRKFDVRSYLLIACTTPYMIFFGHGYARLTLSLYDPHSSDLGGHLTNQFMQKKSPLYMLLKEHTVWSMEHLNRYISDTFWKARGLAKDWVFTTLKKRMQQIMAHCFLAAKPKLDCKLGYFDLIGCDFLIDDNFKVWLLEMNSNPALHTNCEVLKEVIPGVVIETLDLVLETFRKSLRGQKMLPLLSQRRFVLLHNGEADPRPHLGGSCSLRRWPPLPTRQAKSSGPPMPHAPDQPGARRPAPPPLVPQRPRPPGPDLDSAHDGEPQAPGTEQSGTGNRHPAQEPSPGTAKEEREEPENARP</sequence>
<organism>
    <name type="scientific">Homo sapiens</name>
    <name type="common">Human</name>
    <dbReference type="NCBI Taxonomy" id="9606"/>
    <lineage>
        <taxon>Eukaryota</taxon>
        <taxon>Metazoa</taxon>
        <taxon>Chordata</taxon>
        <taxon>Craniata</taxon>
        <taxon>Vertebrata</taxon>
        <taxon>Euteleostomi</taxon>
        <taxon>Mammalia</taxon>
        <taxon>Eutheria</taxon>
        <taxon>Euarchontoglires</taxon>
        <taxon>Primates</taxon>
        <taxon>Haplorrhini</taxon>
        <taxon>Catarrhini</taxon>
        <taxon>Hominidae</taxon>
        <taxon>Homo</taxon>
    </lineage>
</organism>
<proteinExistence type="evidence at protein level"/>
<protein>
    <recommendedName>
        <fullName evidence="8">Inactive polyglycylase TTLL10</fullName>
    </recommendedName>
    <alternativeName>
        <fullName>Tubulin--tyrosine ligase-like protein 10</fullName>
    </alternativeName>
</protein>